<dbReference type="EMBL" id="CP000381">
    <property type="protein sequence ID" value="ABX74237.1"/>
    <property type="molecule type" value="Genomic_DNA"/>
</dbReference>
<dbReference type="RefSeq" id="WP_012222182.1">
    <property type="nucleotide sequence ID" value="NC_010120.1"/>
</dbReference>
<dbReference type="SMR" id="A9M4L8"/>
<dbReference type="KEGG" id="nmn:NMCC_2120"/>
<dbReference type="HOGENOM" id="CLU_002472_4_1_4"/>
<dbReference type="Proteomes" id="UP000001177">
    <property type="component" value="Chromosome"/>
</dbReference>
<dbReference type="GO" id="GO:0005829">
    <property type="term" value="C:cytosol"/>
    <property type="evidence" value="ECO:0007669"/>
    <property type="project" value="TreeGrafter"/>
</dbReference>
<dbReference type="GO" id="GO:0005524">
    <property type="term" value="F:ATP binding"/>
    <property type="evidence" value="ECO:0007669"/>
    <property type="project" value="UniProtKB-UniRule"/>
</dbReference>
<dbReference type="GO" id="GO:0140664">
    <property type="term" value="F:ATP-dependent DNA damage sensor activity"/>
    <property type="evidence" value="ECO:0007669"/>
    <property type="project" value="InterPro"/>
</dbReference>
<dbReference type="GO" id="GO:0003684">
    <property type="term" value="F:damaged DNA binding"/>
    <property type="evidence" value="ECO:0007669"/>
    <property type="project" value="UniProtKB-UniRule"/>
</dbReference>
<dbReference type="GO" id="GO:0030983">
    <property type="term" value="F:mismatched DNA binding"/>
    <property type="evidence" value="ECO:0007669"/>
    <property type="project" value="InterPro"/>
</dbReference>
<dbReference type="GO" id="GO:0006298">
    <property type="term" value="P:mismatch repair"/>
    <property type="evidence" value="ECO:0007669"/>
    <property type="project" value="UniProtKB-UniRule"/>
</dbReference>
<dbReference type="CDD" id="cd03284">
    <property type="entry name" value="ABC_MutS1"/>
    <property type="match status" value="1"/>
</dbReference>
<dbReference type="FunFam" id="1.10.1420.10:FF:000018">
    <property type="entry name" value="DNA mismatch repair protein MutS"/>
    <property type="match status" value="1"/>
</dbReference>
<dbReference type="FunFam" id="3.40.1170.10:FF:000001">
    <property type="entry name" value="DNA mismatch repair protein MutS"/>
    <property type="match status" value="1"/>
</dbReference>
<dbReference type="FunFam" id="3.40.50.300:FF:000283">
    <property type="entry name" value="DNA mismatch repair protein MutS"/>
    <property type="match status" value="1"/>
</dbReference>
<dbReference type="Gene3D" id="1.10.1420.10">
    <property type="match status" value="2"/>
</dbReference>
<dbReference type="Gene3D" id="6.10.140.430">
    <property type="match status" value="1"/>
</dbReference>
<dbReference type="Gene3D" id="3.40.1170.10">
    <property type="entry name" value="DNA repair protein MutS, domain I"/>
    <property type="match status" value="1"/>
</dbReference>
<dbReference type="Gene3D" id="3.30.420.110">
    <property type="entry name" value="MutS, connector domain"/>
    <property type="match status" value="1"/>
</dbReference>
<dbReference type="Gene3D" id="3.40.50.300">
    <property type="entry name" value="P-loop containing nucleotide triphosphate hydrolases"/>
    <property type="match status" value="1"/>
</dbReference>
<dbReference type="HAMAP" id="MF_00096">
    <property type="entry name" value="MutS"/>
    <property type="match status" value="1"/>
</dbReference>
<dbReference type="InterPro" id="IPR005748">
    <property type="entry name" value="DNA_mismatch_repair_MutS"/>
</dbReference>
<dbReference type="InterPro" id="IPR007695">
    <property type="entry name" value="DNA_mismatch_repair_MutS-lik_N"/>
</dbReference>
<dbReference type="InterPro" id="IPR017261">
    <property type="entry name" value="DNA_mismatch_repair_MutS/MSH"/>
</dbReference>
<dbReference type="InterPro" id="IPR000432">
    <property type="entry name" value="DNA_mismatch_repair_MutS_C"/>
</dbReference>
<dbReference type="InterPro" id="IPR007861">
    <property type="entry name" value="DNA_mismatch_repair_MutS_clamp"/>
</dbReference>
<dbReference type="InterPro" id="IPR007696">
    <property type="entry name" value="DNA_mismatch_repair_MutS_core"/>
</dbReference>
<dbReference type="InterPro" id="IPR016151">
    <property type="entry name" value="DNA_mismatch_repair_MutS_N"/>
</dbReference>
<dbReference type="InterPro" id="IPR036187">
    <property type="entry name" value="DNA_mismatch_repair_MutS_sf"/>
</dbReference>
<dbReference type="InterPro" id="IPR007860">
    <property type="entry name" value="DNA_mmatch_repair_MutS_con_dom"/>
</dbReference>
<dbReference type="InterPro" id="IPR045076">
    <property type="entry name" value="MutS"/>
</dbReference>
<dbReference type="InterPro" id="IPR036678">
    <property type="entry name" value="MutS_con_dom_sf"/>
</dbReference>
<dbReference type="InterPro" id="IPR027417">
    <property type="entry name" value="P-loop_NTPase"/>
</dbReference>
<dbReference type="NCBIfam" id="TIGR01070">
    <property type="entry name" value="mutS1"/>
    <property type="match status" value="1"/>
</dbReference>
<dbReference type="NCBIfam" id="NF003810">
    <property type="entry name" value="PRK05399.1"/>
    <property type="match status" value="1"/>
</dbReference>
<dbReference type="PANTHER" id="PTHR11361:SF34">
    <property type="entry name" value="DNA MISMATCH REPAIR PROTEIN MSH1, MITOCHONDRIAL"/>
    <property type="match status" value="1"/>
</dbReference>
<dbReference type="PANTHER" id="PTHR11361">
    <property type="entry name" value="DNA MISMATCH REPAIR PROTEIN MUTS FAMILY MEMBER"/>
    <property type="match status" value="1"/>
</dbReference>
<dbReference type="Pfam" id="PF01624">
    <property type="entry name" value="MutS_I"/>
    <property type="match status" value="1"/>
</dbReference>
<dbReference type="Pfam" id="PF05188">
    <property type="entry name" value="MutS_II"/>
    <property type="match status" value="1"/>
</dbReference>
<dbReference type="Pfam" id="PF05192">
    <property type="entry name" value="MutS_III"/>
    <property type="match status" value="1"/>
</dbReference>
<dbReference type="Pfam" id="PF05190">
    <property type="entry name" value="MutS_IV"/>
    <property type="match status" value="1"/>
</dbReference>
<dbReference type="Pfam" id="PF00488">
    <property type="entry name" value="MutS_V"/>
    <property type="match status" value="1"/>
</dbReference>
<dbReference type="PIRSF" id="PIRSF037677">
    <property type="entry name" value="DNA_mis_repair_Msh6"/>
    <property type="match status" value="1"/>
</dbReference>
<dbReference type="SMART" id="SM00534">
    <property type="entry name" value="MUTSac"/>
    <property type="match status" value="1"/>
</dbReference>
<dbReference type="SMART" id="SM00533">
    <property type="entry name" value="MUTSd"/>
    <property type="match status" value="1"/>
</dbReference>
<dbReference type="SUPFAM" id="SSF55271">
    <property type="entry name" value="DNA repair protein MutS, domain I"/>
    <property type="match status" value="1"/>
</dbReference>
<dbReference type="SUPFAM" id="SSF53150">
    <property type="entry name" value="DNA repair protein MutS, domain II"/>
    <property type="match status" value="1"/>
</dbReference>
<dbReference type="SUPFAM" id="SSF48334">
    <property type="entry name" value="DNA repair protein MutS, domain III"/>
    <property type="match status" value="1"/>
</dbReference>
<dbReference type="SUPFAM" id="SSF52540">
    <property type="entry name" value="P-loop containing nucleoside triphosphate hydrolases"/>
    <property type="match status" value="1"/>
</dbReference>
<dbReference type="PROSITE" id="PS00486">
    <property type="entry name" value="DNA_MISMATCH_REPAIR_2"/>
    <property type="match status" value="1"/>
</dbReference>
<sequence>MSKSAVSPMMQQYLGIKAQHTDKLVFYRMGDFYEMFFDDAVEAAKLLDITLTTRGQMDGVPIKMAGVPFHAAEQYLARLVKLGKSVAICEQVGEVGAGKGPVERKVVRIVTPGTLTDSALLEDKETNRIVAVSPDKKYIGLAWASLQSGEFKTKLTTVDKLDDELARLQAAEILLPDSKNTPQLQTASGVTRLNAWQFAADAGEKLLTEYFGCQDLRGFGLDGKEHAVAIGAAGALLNYIRLTQNLMPQHLDGLSLETDSQYIGMDAATRRNLEITQTLSGKKSPTLMSTLDLCATHMGSRLLALWLHHPLRNRAHIRARQEAVAALESQYKPLQCRLKNIADIERIAARIAVGNARPRDLAALRDSLFALSEIDLSANGSSLLETLKAVFPETLPVAETLKAAVMPEPAVWLKDGNVINHGFHPELDELRRIQNHGDEFLLDLEAKERERTGLSTLKVEFNRVHGFYIELSKTQAEQAPADYQRRQTLKNAERFITPELKAFEDKVMTAQEQALALEKQLFDGVLKNLQTALPQLQKAAKAAAALDVLSTFSALAKERNFVRPEFADYPVIHIENGRHPVVEQQVRHFTANHTNLDHKHRLMLLTGPNMGGKSTYMRQVALIVLLAHTGCFVPADAATIGPIDQIFTRIGASDDLASNRSTFMVEMSETAYILHHATEQSLVLMDEVGRGTSTFDGLALAHAVAEHLLQKNKSFSLFATHYFELTKLPEAHATAVNMHLSALEQGQDIVFLHHIEPGPASKSYGIAVAKLAGLPVRALKSAQKHLNELEDQAAANRPQLDIFSTMPSEKGDEPNVDSFVDKAEEKHFEGILAAALEKLDPDSLTPREALSELYRLKDLCKSVS</sequence>
<accession>A9M4L8</accession>
<proteinExistence type="inferred from homology"/>
<evidence type="ECO:0000255" key="1">
    <source>
        <dbReference type="HAMAP-Rule" id="MF_00096"/>
    </source>
</evidence>
<gene>
    <name evidence="1" type="primary">mutS</name>
    <name type="ordered locus">NMCC_2120</name>
</gene>
<protein>
    <recommendedName>
        <fullName evidence="1">DNA mismatch repair protein MutS</fullName>
    </recommendedName>
</protein>
<reference key="1">
    <citation type="journal article" date="2008" name="Genomics">
        <title>Characterization of ST-4821 complex, a unique Neisseria meningitidis clone.</title>
        <authorList>
            <person name="Peng J."/>
            <person name="Yang L."/>
            <person name="Yang F."/>
            <person name="Yang J."/>
            <person name="Yan Y."/>
            <person name="Nie H."/>
            <person name="Zhang X."/>
            <person name="Xiong Z."/>
            <person name="Jiang Y."/>
            <person name="Cheng F."/>
            <person name="Xu X."/>
            <person name="Chen S."/>
            <person name="Sun L."/>
            <person name="Li W."/>
            <person name="Shen Y."/>
            <person name="Shao Z."/>
            <person name="Liang X."/>
            <person name="Xu J."/>
            <person name="Jin Q."/>
        </authorList>
    </citation>
    <scope>NUCLEOTIDE SEQUENCE [LARGE SCALE GENOMIC DNA]</scope>
    <source>
        <strain>053442</strain>
    </source>
</reference>
<feature type="chain" id="PRO_1000075557" description="DNA mismatch repair protein MutS">
    <location>
        <begin position="1"/>
        <end position="864"/>
    </location>
</feature>
<feature type="binding site" evidence="1">
    <location>
        <begin position="607"/>
        <end position="614"/>
    </location>
    <ligand>
        <name>ATP</name>
        <dbReference type="ChEBI" id="CHEBI:30616"/>
    </ligand>
</feature>
<keyword id="KW-0067">ATP-binding</keyword>
<keyword id="KW-0227">DNA damage</keyword>
<keyword id="KW-0234">DNA repair</keyword>
<keyword id="KW-0238">DNA-binding</keyword>
<keyword id="KW-0547">Nucleotide-binding</keyword>
<comment type="function">
    <text evidence="1">This protein is involved in the repair of mismatches in DNA. It is possible that it carries out the mismatch recognition step. This protein has a weak ATPase activity.</text>
</comment>
<comment type="similarity">
    <text evidence="1">Belongs to the DNA mismatch repair MutS family.</text>
</comment>
<organism>
    <name type="scientific">Neisseria meningitidis serogroup C (strain 053442)</name>
    <dbReference type="NCBI Taxonomy" id="374833"/>
    <lineage>
        <taxon>Bacteria</taxon>
        <taxon>Pseudomonadati</taxon>
        <taxon>Pseudomonadota</taxon>
        <taxon>Betaproteobacteria</taxon>
        <taxon>Neisseriales</taxon>
        <taxon>Neisseriaceae</taxon>
        <taxon>Neisseria</taxon>
    </lineage>
</organism>
<name>MUTS_NEIM0</name>